<name>RL11_STRPZ</name>
<reference key="1">
    <citation type="journal article" date="2008" name="J. Bacteriol.">
        <title>Genome sequence of a nephritogenic and highly transformable M49 strain of Streptococcus pyogenes.</title>
        <authorList>
            <person name="McShan W.M."/>
            <person name="Ferretti J.J."/>
            <person name="Karasawa T."/>
            <person name="Suvorov A.N."/>
            <person name="Lin S."/>
            <person name="Qin B."/>
            <person name="Jia H."/>
            <person name="Kenton S."/>
            <person name="Najar F."/>
            <person name="Wu H."/>
            <person name="Scott J."/>
            <person name="Roe B.A."/>
            <person name="Savic D.J."/>
        </authorList>
    </citation>
    <scope>NUCLEOTIDE SEQUENCE [LARGE SCALE GENOMIC DNA]</scope>
    <source>
        <strain>NZ131</strain>
    </source>
</reference>
<proteinExistence type="inferred from homology"/>
<comment type="function">
    <text evidence="1">Forms part of the ribosomal stalk which helps the ribosome interact with GTP-bound translation factors.</text>
</comment>
<comment type="subunit">
    <text evidence="1">Part of the ribosomal stalk of the 50S ribosomal subunit. Interacts with L10 and the large rRNA to form the base of the stalk. L10 forms an elongated spine to which L12 dimers bind in a sequential fashion forming a multimeric L10(L12)X complex.</text>
</comment>
<comment type="PTM">
    <text evidence="1">One or more lysine residues are methylated.</text>
</comment>
<comment type="similarity">
    <text evidence="1">Belongs to the universal ribosomal protein uL11 family.</text>
</comment>
<protein>
    <recommendedName>
        <fullName evidence="1">Large ribosomal subunit protein uL11</fullName>
    </recommendedName>
    <alternativeName>
        <fullName evidence="2">50S ribosomal protein L11</fullName>
    </alternativeName>
</protein>
<evidence type="ECO:0000255" key="1">
    <source>
        <dbReference type="HAMAP-Rule" id="MF_00736"/>
    </source>
</evidence>
<evidence type="ECO:0000305" key="2"/>
<feature type="chain" id="PRO_1000195730" description="Large ribosomal subunit protein uL11">
    <location>
        <begin position="1"/>
        <end position="141"/>
    </location>
</feature>
<accession>B5XK61</accession>
<keyword id="KW-0488">Methylation</keyword>
<keyword id="KW-0687">Ribonucleoprotein</keyword>
<keyword id="KW-0689">Ribosomal protein</keyword>
<keyword id="KW-0694">RNA-binding</keyword>
<keyword id="KW-0699">rRNA-binding</keyword>
<dbReference type="EMBL" id="CP000829">
    <property type="protein sequence ID" value="ACI60723.1"/>
    <property type="molecule type" value="Genomic_DNA"/>
</dbReference>
<dbReference type="SMR" id="B5XK61"/>
<dbReference type="KEGG" id="soz:Spy49_0387"/>
<dbReference type="HOGENOM" id="CLU_074237_2_1_9"/>
<dbReference type="Proteomes" id="UP000001039">
    <property type="component" value="Chromosome"/>
</dbReference>
<dbReference type="GO" id="GO:0022625">
    <property type="term" value="C:cytosolic large ribosomal subunit"/>
    <property type="evidence" value="ECO:0007669"/>
    <property type="project" value="TreeGrafter"/>
</dbReference>
<dbReference type="GO" id="GO:0070180">
    <property type="term" value="F:large ribosomal subunit rRNA binding"/>
    <property type="evidence" value="ECO:0007669"/>
    <property type="project" value="UniProtKB-UniRule"/>
</dbReference>
<dbReference type="GO" id="GO:0003735">
    <property type="term" value="F:structural constituent of ribosome"/>
    <property type="evidence" value="ECO:0007669"/>
    <property type="project" value="InterPro"/>
</dbReference>
<dbReference type="GO" id="GO:0006412">
    <property type="term" value="P:translation"/>
    <property type="evidence" value="ECO:0007669"/>
    <property type="project" value="UniProtKB-UniRule"/>
</dbReference>
<dbReference type="CDD" id="cd00349">
    <property type="entry name" value="Ribosomal_L11"/>
    <property type="match status" value="1"/>
</dbReference>
<dbReference type="FunFam" id="1.10.10.250:FF:000001">
    <property type="entry name" value="50S ribosomal protein L11"/>
    <property type="match status" value="1"/>
</dbReference>
<dbReference type="FunFam" id="3.30.1550.10:FF:000001">
    <property type="entry name" value="50S ribosomal protein L11"/>
    <property type="match status" value="1"/>
</dbReference>
<dbReference type="Gene3D" id="1.10.10.250">
    <property type="entry name" value="Ribosomal protein L11, C-terminal domain"/>
    <property type="match status" value="1"/>
</dbReference>
<dbReference type="Gene3D" id="3.30.1550.10">
    <property type="entry name" value="Ribosomal protein L11/L12, N-terminal domain"/>
    <property type="match status" value="1"/>
</dbReference>
<dbReference type="HAMAP" id="MF_00736">
    <property type="entry name" value="Ribosomal_uL11"/>
    <property type="match status" value="1"/>
</dbReference>
<dbReference type="InterPro" id="IPR000911">
    <property type="entry name" value="Ribosomal_uL11"/>
</dbReference>
<dbReference type="InterPro" id="IPR006519">
    <property type="entry name" value="Ribosomal_uL11_bac-typ"/>
</dbReference>
<dbReference type="InterPro" id="IPR020783">
    <property type="entry name" value="Ribosomal_uL11_C"/>
</dbReference>
<dbReference type="InterPro" id="IPR036769">
    <property type="entry name" value="Ribosomal_uL11_C_sf"/>
</dbReference>
<dbReference type="InterPro" id="IPR020785">
    <property type="entry name" value="Ribosomal_uL11_CS"/>
</dbReference>
<dbReference type="InterPro" id="IPR020784">
    <property type="entry name" value="Ribosomal_uL11_N"/>
</dbReference>
<dbReference type="InterPro" id="IPR036796">
    <property type="entry name" value="Ribosomal_uL11_N_sf"/>
</dbReference>
<dbReference type="NCBIfam" id="TIGR01632">
    <property type="entry name" value="L11_bact"/>
    <property type="match status" value="1"/>
</dbReference>
<dbReference type="PANTHER" id="PTHR11661">
    <property type="entry name" value="60S RIBOSOMAL PROTEIN L12"/>
    <property type="match status" value="1"/>
</dbReference>
<dbReference type="PANTHER" id="PTHR11661:SF1">
    <property type="entry name" value="LARGE RIBOSOMAL SUBUNIT PROTEIN UL11M"/>
    <property type="match status" value="1"/>
</dbReference>
<dbReference type="Pfam" id="PF00298">
    <property type="entry name" value="Ribosomal_L11"/>
    <property type="match status" value="1"/>
</dbReference>
<dbReference type="Pfam" id="PF03946">
    <property type="entry name" value="Ribosomal_L11_N"/>
    <property type="match status" value="1"/>
</dbReference>
<dbReference type="SMART" id="SM00649">
    <property type="entry name" value="RL11"/>
    <property type="match status" value="1"/>
</dbReference>
<dbReference type="SUPFAM" id="SSF54747">
    <property type="entry name" value="Ribosomal L11/L12e N-terminal domain"/>
    <property type="match status" value="1"/>
</dbReference>
<dbReference type="SUPFAM" id="SSF46906">
    <property type="entry name" value="Ribosomal protein L11, C-terminal domain"/>
    <property type="match status" value="1"/>
</dbReference>
<dbReference type="PROSITE" id="PS00359">
    <property type="entry name" value="RIBOSOMAL_L11"/>
    <property type="match status" value="1"/>
</dbReference>
<sequence>MAKKVEKLVKLQIPAGKATPAPPVGPALGQAGINIMGFTKEFNARTADQAGMIIPVVISVYEDKSFDFITKTPPAAVLLKKAAGVEKGSGTPNTTKVATVTRAQVQEIAETKMPDLNAANIEAAMRMIEGTARSMGFTVTD</sequence>
<gene>
    <name evidence="1" type="primary">rplK</name>
    <name type="ordered locus">Spy49_0387</name>
</gene>
<organism>
    <name type="scientific">Streptococcus pyogenes serotype M49 (strain NZ131)</name>
    <dbReference type="NCBI Taxonomy" id="471876"/>
    <lineage>
        <taxon>Bacteria</taxon>
        <taxon>Bacillati</taxon>
        <taxon>Bacillota</taxon>
        <taxon>Bacilli</taxon>
        <taxon>Lactobacillales</taxon>
        <taxon>Streptococcaceae</taxon>
        <taxon>Streptococcus</taxon>
    </lineage>
</organism>